<protein>
    <recommendedName>
        <fullName evidence="1">GTPase Obg</fullName>
        <ecNumber evidence="1">3.6.5.-</ecNumber>
    </recommendedName>
    <alternativeName>
        <fullName evidence="1">GTP-binding protein Obg</fullName>
    </alternativeName>
</protein>
<proteinExistence type="inferred from homology"/>
<reference key="1">
    <citation type="journal article" date="2007" name="J. Bacteriol.">
        <title>Genome sequence of Avery's virulent serotype 2 strain D39 of Streptococcus pneumoniae and comparison with that of unencapsulated laboratory strain R6.</title>
        <authorList>
            <person name="Lanie J.A."/>
            <person name="Ng W.-L."/>
            <person name="Kazmierczak K.M."/>
            <person name="Andrzejewski T.M."/>
            <person name="Davidsen T.M."/>
            <person name="Wayne K.J."/>
            <person name="Tettelin H."/>
            <person name="Glass J.I."/>
            <person name="Winkler M.E."/>
        </authorList>
    </citation>
    <scope>NUCLEOTIDE SEQUENCE [LARGE SCALE GENOMIC DNA]</scope>
    <source>
        <strain>D39 / NCTC 7466</strain>
    </source>
</reference>
<evidence type="ECO:0000255" key="1">
    <source>
        <dbReference type="HAMAP-Rule" id="MF_01454"/>
    </source>
</evidence>
<evidence type="ECO:0000255" key="2">
    <source>
        <dbReference type="PROSITE-ProRule" id="PRU01229"/>
    </source>
</evidence>
<evidence type="ECO:0000255" key="3">
    <source>
        <dbReference type="PROSITE-ProRule" id="PRU01231"/>
    </source>
</evidence>
<accession>Q04KK7</accession>
<dbReference type="EC" id="3.6.5.-" evidence="1"/>
<dbReference type="EMBL" id="CP000410">
    <property type="protein sequence ID" value="ABJ53617.1"/>
    <property type="molecule type" value="Genomic_DNA"/>
</dbReference>
<dbReference type="SMR" id="Q04KK7"/>
<dbReference type="PaxDb" id="373153-SPD_0964"/>
<dbReference type="KEGG" id="spd:SPD_0964"/>
<dbReference type="eggNOG" id="COG0536">
    <property type="taxonomic scope" value="Bacteria"/>
</dbReference>
<dbReference type="HOGENOM" id="CLU_011747_2_1_9"/>
<dbReference type="BioCyc" id="SPNE373153:G1G6V-1056-MONOMER"/>
<dbReference type="Proteomes" id="UP000001452">
    <property type="component" value="Chromosome"/>
</dbReference>
<dbReference type="GO" id="GO:0005737">
    <property type="term" value="C:cytoplasm"/>
    <property type="evidence" value="ECO:0007669"/>
    <property type="project" value="UniProtKB-SubCell"/>
</dbReference>
<dbReference type="GO" id="GO:0005525">
    <property type="term" value="F:GTP binding"/>
    <property type="evidence" value="ECO:0007669"/>
    <property type="project" value="UniProtKB-UniRule"/>
</dbReference>
<dbReference type="GO" id="GO:0003924">
    <property type="term" value="F:GTPase activity"/>
    <property type="evidence" value="ECO:0007669"/>
    <property type="project" value="UniProtKB-UniRule"/>
</dbReference>
<dbReference type="GO" id="GO:0000287">
    <property type="term" value="F:magnesium ion binding"/>
    <property type="evidence" value="ECO:0007669"/>
    <property type="project" value="InterPro"/>
</dbReference>
<dbReference type="GO" id="GO:0042254">
    <property type="term" value="P:ribosome biogenesis"/>
    <property type="evidence" value="ECO:0007669"/>
    <property type="project" value="UniProtKB-UniRule"/>
</dbReference>
<dbReference type="CDD" id="cd01898">
    <property type="entry name" value="Obg"/>
    <property type="match status" value="1"/>
</dbReference>
<dbReference type="FunFam" id="2.70.210.12:FF:000001">
    <property type="entry name" value="GTPase Obg"/>
    <property type="match status" value="1"/>
</dbReference>
<dbReference type="FunFam" id="3.40.50.300:FF:000515">
    <property type="entry name" value="GTPase Obg"/>
    <property type="match status" value="1"/>
</dbReference>
<dbReference type="Gene3D" id="3.30.300.350">
    <property type="entry name" value="GTP-binding protein OBG, C-terminal domain"/>
    <property type="match status" value="1"/>
</dbReference>
<dbReference type="Gene3D" id="2.70.210.12">
    <property type="entry name" value="GTP1/OBG domain"/>
    <property type="match status" value="1"/>
</dbReference>
<dbReference type="Gene3D" id="3.40.50.300">
    <property type="entry name" value="P-loop containing nucleotide triphosphate hydrolases"/>
    <property type="match status" value="1"/>
</dbReference>
<dbReference type="HAMAP" id="MF_01454">
    <property type="entry name" value="GTPase_Obg"/>
    <property type="match status" value="1"/>
</dbReference>
<dbReference type="InterPro" id="IPR031167">
    <property type="entry name" value="G_OBG"/>
</dbReference>
<dbReference type="InterPro" id="IPR006073">
    <property type="entry name" value="GTP-bd"/>
</dbReference>
<dbReference type="InterPro" id="IPR014100">
    <property type="entry name" value="GTP-bd_Obg/CgtA"/>
</dbReference>
<dbReference type="InterPro" id="IPR036346">
    <property type="entry name" value="GTP-bd_prot_GTP1/OBG_C_sf"/>
</dbReference>
<dbReference type="InterPro" id="IPR006074">
    <property type="entry name" value="GTP1-OBG_CS"/>
</dbReference>
<dbReference type="InterPro" id="IPR006169">
    <property type="entry name" value="GTP1_OBG_dom"/>
</dbReference>
<dbReference type="InterPro" id="IPR036726">
    <property type="entry name" value="GTP1_OBG_dom_sf"/>
</dbReference>
<dbReference type="InterPro" id="IPR045086">
    <property type="entry name" value="OBG_GTPase"/>
</dbReference>
<dbReference type="InterPro" id="IPR015349">
    <property type="entry name" value="OCT_dom"/>
</dbReference>
<dbReference type="InterPro" id="IPR027417">
    <property type="entry name" value="P-loop_NTPase"/>
</dbReference>
<dbReference type="InterPro" id="IPR005225">
    <property type="entry name" value="Small_GTP-bd"/>
</dbReference>
<dbReference type="NCBIfam" id="TIGR02729">
    <property type="entry name" value="Obg_CgtA"/>
    <property type="match status" value="1"/>
</dbReference>
<dbReference type="NCBIfam" id="TIGR03595">
    <property type="entry name" value="Obg_CgtA_exten"/>
    <property type="match status" value="1"/>
</dbReference>
<dbReference type="NCBIfam" id="NF008954">
    <property type="entry name" value="PRK12296.1"/>
    <property type="match status" value="1"/>
</dbReference>
<dbReference type="NCBIfam" id="NF008955">
    <property type="entry name" value="PRK12297.1"/>
    <property type="match status" value="1"/>
</dbReference>
<dbReference type="NCBIfam" id="NF008956">
    <property type="entry name" value="PRK12299.1"/>
    <property type="match status" value="1"/>
</dbReference>
<dbReference type="NCBIfam" id="TIGR00231">
    <property type="entry name" value="small_GTP"/>
    <property type="match status" value="1"/>
</dbReference>
<dbReference type="PANTHER" id="PTHR11702">
    <property type="entry name" value="DEVELOPMENTALLY REGULATED GTP-BINDING PROTEIN-RELATED"/>
    <property type="match status" value="1"/>
</dbReference>
<dbReference type="PANTHER" id="PTHR11702:SF31">
    <property type="entry name" value="MITOCHONDRIAL RIBOSOME-ASSOCIATED GTPASE 2"/>
    <property type="match status" value="1"/>
</dbReference>
<dbReference type="Pfam" id="PF09269">
    <property type="entry name" value="DUF1967"/>
    <property type="match status" value="1"/>
</dbReference>
<dbReference type="Pfam" id="PF01018">
    <property type="entry name" value="GTP1_OBG"/>
    <property type="match status" value="1"/>
</dbReference>
<dbReference type="Pfam" id="PF01926">
    <property type="entry name" value="MMR_HSR1"/>
    <property type="match status" value="1"/>
</dbReference>
<dbReference type="PIRSF" id="PIRSF002401">
    <property type="entry name" value="GTP_bd_Obg/CgtA"/>
    <property type="match status" value="1"/>
</dbReference>
<dbReference type="PRINTS" id="PR00326">
    <property type="entry name" value="GTP1OBG"/>
</dbReference>
<dbReference type="SUPFAM" id="SSF102741">
    <property type="entry name" value="Obg GTP-binding protein C-terminal domain"/>
    <property type="match status" value="1"/>
</dbReference>
<dbReference type="SUPFAM" id="SSF82051">
    <property type="entry name" value="Obg GTP-binding protein N-terminal domain"/>
    <property type="match status" value="1"/>
</dbReference>
<dbReference type="SUPFAM" id="SSF52540">
    <property type="entry name" value="P-loop containing nucleoside triphosphate hydrolases"/>
    <property type="match status" value="1"/>
</dbReference>
<dbReference type="PROSITE" id="PS51710">
    <property type="entry name" value="G_OBG"/>
    <property type="match status" value="1"/>
</dbReference>
<dbReference type="PROSITE" id="PS00905">
    <property type="entry name" value="GTP1_OBG"/>
    <property type="match status" value="1"/>
</dbReference>
<dbReference type="PROSITE" id="PS51883">
    <property type="entry name" value="OBG"/>
    <property type="match status" value="1"/>
</dbReference>
<dbReference type="PROSITE" id="PS51881">
    <property type="entry name" value="OCT"/>
    <property type="match status" value="1"/>
</dbReference>
<keyword id="KW-0963">Cytoplasm</keyword>
<keyword id="KW-0342">GTP-binding</keyword>
<keyword id="KW-0378">Hydrolase</keyword>
<keyword id="KW-0460">Magnesium</keyword>
<keyword id="KW-0479">Metal-binding</keyword>
<keyword id="KW-0547">Nucleotide-binding</keyword>
<keyword id="KW-1185">Reference proteome</keyword>
<comment type="function">
    <text evidence="1">An essential GTPase which binds GTP, GDP and possibly (p)ppGpp with moderate affinity, with high nucleotide exchange rates and a fairly low GTP hydrolysis rate. Plays a role in control of the cell cycle, stress response, ribosome biogenesis and in those bacteria that undergo differentiation, in morphogenesis control.</text>
</comment>
<comment type="cofactor">
    <cofactor evidence="1">
        <name>Mg(2+)</name>
        <dbReference type="ChEBI" id="CHEBI:18420"/>
    </cofactor>
</comment>
<comment type="subunit">
    <text evidence="1">Monomer.</text>
</comment>
<comment type="subcellular location">
    <subcellularLocation>
        <location evidence="1">Cytoplasm</location>
    </subcellularLocation>
</comment>
<comment type="similarity">
    <text evidence="1">Belongs to the TRAFAC class OBG-HflX-like GTPase superfamily. OBG GTPase family.</text>
</comment>
<feature type="chain" id="PRO_0000386303" description="GTPase Obg">
    <location>
        <begin position="1"/>
        <end position="436"/>
    </location>
</feature>
<feature type="domain" description="Obg" evidence="3">
    <location>
        <begin position="2"/>
        <end position="160"/>
    </location>
</feature>
<feature type="domain" description="OBG-type G" evidence="1">
    <location>
        <begin position="161"/>
        <end position="338"/>
    </location>
</feature>
<feature type="domain" description="OCT" evidence="2">
    <location>
        <begin position="358"/>
        <end position="436"/>
    </location>
</feature>
<feature type="binding site" evidence="1">
    <location>
        <begin position="167"/>
        <end position="174"/>
    </location>
    <ligand>
        <name>GTP</name>
        <dbReference type="ChEBI" id="CHEBI:37565"/>
    </ligand>
</feature>
<feature type="binding site" evidence="1">
    <location>
        <position position="174"/>
    </location>
    <ligand>
        <name>Mg(2+)</name>
        <dbReference type="ChEBI" id="CHEBI:18420"/>
    </ligand>
</feature>
<feature type="binding site" evidence="1">
    <location>
        <begin position="192"/>
        <end position="196"/>
    </location>
    <ligand>
        <name>GTP</name>
        <dbReference type="ChEBI" id="CHEBI:37565"/>
    </ligand>
</feature>
<feature type="binding site" evidence="1">
    <location>
        <position position="194"/>
    </location>
    <ligand>
        <name>Mg(2+)</name>
        <dbReference type="ChEBI" id="CHEBI:18420"/>
    </ligand>
</feature>
<feature type="binding site" evidence="1">
    <location>
        <begin position="214"/>
        <end position="217"/>
    </location>
    <ligand>
        <name>GTP</name>
        <dbReference type="ChEBI" id="CHEBI:37565"/>
    </ligand>
</feature>
<feature type="binding site" evidence="1">
    <location>
        <begin position="284"/>
        <end position="287"/>
    </location>
    <ligand>
        <name>GTP</name>
        <dbReference type="ChEBI" id="CHEBI:37565"/>
    </ligand>
</feature>
<feature type="binding site" evidence="1">
    <location>
        <begin position="319"/>
        <end position="321"/>
    </location>
    <ligand>
        <name>GTP</name>
        <dbReference type="ChEBI" id="CHEBI:37565"/>
    </ligand>
</feature>
<gene>
    <name evidence="1" type="primary">obg</name>
    <name type="ordered locus">SPD_0964</name>
</gene>
<sequence length="436" mass="48421">MSMFLDTAKIKVKAGNGGDGMVAFRREKYVPNGGPWGGDGGRGGNVVFVVDEGLRTLMDFRYNRHFKADSGEKGMTKGMHGRGAEDLRVRVPQGTTVRDAETGKVLTDLIEHGQEFIVAHGGRGGRGNIRFATPKNPAPEISENGEPGQERELQLELKILADVGLVGFPSVGKSTLLSVITSAKPKIGAYHFTTIVPNLGMVRTQSGESFAVADLPGLIEGASQGVGLGTQFLRHIERTRVILHIIDMSASEGRDPYEDYLAINKELESYNLRLMERPQIIVTNKMDMPESQENLEEFKKKLAENYDEFEELPAIFPISGLTKQGLATLLDATAELLDKTPEFLLYDESDMEEEVYYGFDEEEKAFEISRDDDATWVLSGEKLMKLFNMTNFDRDESVMKFARQLRGMGVDEALRARGAKDGDLVRIGKFEFEFVD</sequence>
<name>OBG_STRP2</name>
<organism>
    <name type="scientific">Streptococcus pneumoniae serotype 2 (strain D39 / NCTC 7466)</name>
    <dbReference type="NCBI Taxonomy" id="373153"/>
    <lineage>
        <taxon>Bacteria</taxon>
        <taxon>Bacillati</taxon>
        <taxon>Bacillota</taxon>
        <taxon>Bacilli</taxon>
        <taxon>Lactobacillales</taxon>
        <taxon>Streptococcaceae</taxon>
        <taxon>Streptococcus</taxon>
    </lineage>
</organism>